<evidence type="ECO:0000255" key="1">
    <source>
        <dbReference type="HAMAP-Rule" id="MF_01114"/>
    </source>
</evidence>
<dbReference type="EMBL" id="FM242711">
    <property type="protein sequence ID" value="CAS05467.1"/>
    <property type="molecule type" value="Genomic_DNA"/>
</dbReference>
<dbReference type="RefSeq" id="WP_012681329.1">
    <property type="nucleotide sequence ID" value="NC_012488.1"/>
</dbReference>
<dbReference type="SMR" id="C1KVZ2"/>
<dbReference type="KEGG" id="lmc:Lm4b_01707"/>
<dbReference type="HOGENOM" id="CLU_066607_4_0_9"/>
<dbReference type="GO" id="GO:0005737">
    <property type="term" value="C:cytoplasm"/>
    <property type="evidence" value="ECO:0007669"/>
    <property type="project" value="UniProtKB-SubCell"/>
</dbReference>
<dbReference type="GO" id="GO:0006282">
    <property type="term" value="P:regulation of DNA repair"/>
    <property type="evidence" value="ECO:0007669"/>
    <property type="project" value="UniProtKB-UniRule"/>
</dbReference>
<dbReference type="Gene3D" id="1.10.10.10">
    <property type="entry name" value="Winged helix-like DNA-binding domain superfamily/Winged helix DNA-binding domain"/>
    <property type="match status" value="4"/>
</dbReference>
<dbReference type="HAMAP" id="MF_01114">
    <property type="entry name" value="RecX"/>
    <property type="match status" value="1"/>
</dbReference>
<dbReference type="InterPro" id="IPR053926">
    <property type="entry name" value="RecX_HTH_1st"/>
</dbReference>
<dbReference type="InterPro" id="IPR053924">
    <property type="entry name" value="RecX_HTH_2nd"/>
</dbReference>
<dbReference type="InterPro" id="IPR053925">
    <property type="entry name" value="RecX_HTH_3rd"/>
</dbReference>
<dbReference type="InterPro" id="IPR003783">
    <property type="entry name" value="Regulatory_RecX"/>
</dbReference>
<dbReference type="InterPro" id="IPR036388">
    <property type="entry name" value="WH-like_DNA-bd_sf"/>
</dbReference>
<dbReference type="NCBIfam" id="NF010733">
    <property type="entry name" value="PRK14135.1"/>
    <property type="match status" value="1"/>
</dbReference>
<dbReference type="PANTHER" id="PTHR33602">
    <property type="entry name" value="REGULATORY PROTEIN RECX FAMILY PROTEIN"/>
    <property type="match status" value="1"/>
</dbReference>
<dbReference type="PANTHER" id="PTHR33602:SF1">
    <property type="entry name" value="REGULATORY PROTEIN RECX FAMILY PROTEIN"/>
    <property type="match status" value="1"/>
</dbReference>
<dbReference type="Pfam" id="PF21982">
    <property type="entry name" value="RecX_HTH1"/>
    <property type="match status" value="1"/>
</dbReference>
<dbReference type="Pfam" id="PF02631">
    <property type="entry name" value="RecX_HTH2"/>
    <property type="match status" value="1"/>
</dbReference>
<dbReference type="Pfam" id="PF21981">
    <property type="entry name" value="RecX_HTH3"/>
    <property type="match status" value="1"/>
</dbReference>
<accession>C1KVZ2</accession>
<feature type="chain" id="PRO_1000213594" description="Regulatory protein RecX">
    <location>
        <begin position="1"/>
        <end position="269"/>
    </location>
</feature>
<name>RECX_LISMC</name>
<protein>
    <recommendedName>
        <fullName evidence="1">Regulatory protein RecX</fullName>
    </recommendedName>
</protein>
<keyword id="KW-0963">Cytoplasm</keyword>
<comment type="function">
    <text evidence="1">Modulates RecA activity.</text>
</comment>
<comment type="subcellular location">
    <subcellularLocation>
        <location evidence="1">Cytoplasm</location>
    </subcellularLocation>
</comment>
<comment type="similarity">
    <text evidence="1">Belongs to the RecX family.</text>
</comment>
<organism>
    <name type="scientific">Listeria monocytogenes serotype 4b (strain CLIP80459)</name>
    <dbReference type="NCBI Taxonomy" id="568819"/>
    <lineage>
        <taxon>Bacteria</taxon>
        <taxon>Bacillati</taxon>
        <taxon>Bacillota</taxon>
        <taxon>Bacilli</taxon>
        <taxon>Bacillales</taxon>
        <taxon>Listeriaceae</taxon>
        <taxon>Listeria</taxon>
    </lineage>
</organism>
<sequence>MKITSISVQQKNKERYNIFIDEKYNFSVDEEVLARYQLMKGKVLTEAKIEEIKQADMVRKGLNKAINFLSHRVRSEKEIRDYLRKQEMEAFAIDEILKKLADMDYINDLEFAELYTKTQIKTTLKGPRTIERELVEKGLTREIITQVIEEYSDEAQLENATKQAIKIMKRNNKSAKKMLQQKIITDLIQKGYTSELAKVAATEATSELDVADEAEILQKQIEKTMRKNKRYKPSIAKQKTITSLMQKGFSYDTIQSYLTENEISFEEEE</sequence>
<reference key="1">
    <citation type="journal article" date="2012" name="BMC Genomics">
        <title>Comparative genomics and transcriptomics of lineages I, II, and III strains of Listeria monocytogenes.</title>
        <authorList>
            <person name="Hain T."/>
            <person name="Ghai R."/>
            <person name="Billion A."/>
            <person name="Kuenne C.T."/>
            <person name="Steinweg C."/>
            <person name="Izar B."/>
            <person name="Mohamed W."/>
            <person name="Mraheil M."/>
            <person name="Domann E."/>
            <person name="Schaffrath S."/>
            <person name="Karst U."/>
            <person name="Goesmann A."/>
            <person name="Oehm S."/>
            <person name="Puhler A."/>
            <person name="Merkl R."/>
            <person name="Vorwerk S."/>
            <person name="Glaser P."/>
            <person name="Garrido P."/>
            <person name="Rusniok C."/>
            <person name="Buchrieser C."/>
            <person name="Goebel W."/>
            <person name="Chakraborty T."/>
        </authorList>
    </citation>
    <scope>NUCLEOTIDE SEQUENCE [LARGE SCALE GENOMIC DNA]</scope>
    <source>
        <strain>CLIP80459</strain>
    </source>
</reference>
<gene>
    <name evidence="1" type="primary">recX</name>
    <name type="ordered locus">Lm4b_01707</name>
</gene>
<proteinExistence type="inferred from homology"/>